<evidence type="ECO:0000255" key="1"/>
<evidence type="ECO:0000255" key="2">
    <source>
        <dbReference type="PROSITE-ProRule" id="PRU00260"/>
    </source>
</evidence>
<evidence type="ECO:0000305" key="3"/>
<reference key="1">
    <citation type="journal article" date="2005" name="Mol. Genet. Genomics">
        <title>A fine physical map of the rice chromosome 5.</title>
        <authorList>
            <person name="Cheng C.-H."/>
            <person name="Chung M.C."/>
            <person name="Liu S.-M."/>
            <person name="Chen S.-K."/>
            <person name="Kao F.Y."/>
            <person name="Lin S.-J."/>
            <person name="Hsiao S.-H."/>
            <person name="Tseng I.C."/>
            <person name="Hsing Y.-I.C."/>
            <person name="Wu H.-P."/>
            <person name="Chen C.-S."/>
            <person name="Shaw J.-F."/>
            <person name="Wu J."/>
            <person name="Matsumoto T."/>
            <person name="Sasaki T."/>
            <person name="Chen H.-C."/>
            <person name="Chow T.-Y."/>
        </authorList>
    </citation>
    <scope>NUCLEOTIDE SEQUENCE [LARGE SCALE GENOMIC DNA]</scope>
    <source>
        <strain>cv. Nipponbare</strain>
    </source>
</reference>
<reference key="2">
    <citation type="journal article" date="2005" name="Nature">
        <title>The map-based sequence of the rice genome.</title>
        <authorList>
            <consortium name="International rice genome sequencing project (IRGSP)"/>
        </authorList>
    </citation>
    <scope>NUCLEOTIDE SEQUENCE [LARGE SCALE GENOMIC DNA]</scope>
    <source>
        <strain>cv. Nipponbare</strain>
    </source>
</reference>
<reference key="3">
    <citation type="journal article" date="2013" name="Rice">
        <title>Improvement of the Oryza sativa Nipponbare reference genome using next generation sequence and optical map data.</title>
        <authorList>
            <person name="Kawahara Y."/>
            <person name="de la Bastide M."/>
            <person name="Hamilton J.P."/>
            <person name="Kanamori H."/>
            <person name="McCombie W.R."/>
            <person name="Ouyang S."/>
            <person name="Schwartz D.C."/>
            <person name="Tanaka T."/>
            <person name="Wu J."/>
            <person name="Zhou S."/>
            <person name="Childs K.L."/>
            <person name="Davidson R.M."/>
            <person name="Lin H."/>
            <person name="Quesada-Ocampo L."/>
            <person name="Vaillancourt B."/>
            <person name="Sakai H."/>
            <person name="Lee S.S."/>
            <person name="Kim J."/>
            <person name="Numa H."/>
            <person name="Itoh T."/>
            <person name="Buell C.R."/>
            <person name="Matsumoto T."/>
        </authorList>
    </citation>
    <scope>GENOME REANNOTATION</scope>
    <source>
        <strain>cv. Nipponbare</strain>
    </source>
</reference>
<reference key="4">
    <citation type="journal article" date="2005" name="PLoS Biol.">
        <title>The genomes of Oryza sativa: a history of duplications.</title>
        <authorList>
            <person name="Yu J."/>
            <person name="Wang J."/>
            <person name="Lin W."/>
            <person name="Li S."/>
            <person name="Li H."/>
            <person name="Zhou J."/>
            <person name="Ni P."/>
            <person name="Dong W."/>
            <person name="Hu S."/>
            <person name="Zeng C."/>
            <person name="Zhang J."/>
            <person name="Zhang Y."/>
            <person name="Li R."/>
            <person name="Xu Z."/>
            <person name="Li S."/>
            <person name="Li X."/>
            <person name="Zheng H."/>
            <person name="Cong L."/>
            <person name="Lin L."/>
            <person name="Yin J."/>
            <person name="Geng J."/>
            <person name="Li G."/>
            <person name="Shi J."/>
            <person name="Liu J."/>
            <person name="Lv H."/>
            <person name="Li J."/>
            <person name="Wang J."/>
            <person name="Deng Y."/>
            <person name="Ran L."/>
            <person name="Shi X."/>
            <person name="Wang X."/>
            <person name="Wu Q."/>
            <person name="Li C."/>
            <person name="Ren X."/>
            <person name="Wang J."/>
            <person name="Wang X."/>
            <person name="Li D."/>
            <person name="Liu D."/>
            <person name="Zhang X."/>
            <person name="Ji Z."/>
            <person name="Zhao W."/>
            <person name="Sun Y."/>
            <person name="Zhang Z."/>
            <person name="Bao J."/>
            <person name="Han Y."/>
            <person name="Dong L."/>
            <person name="Ji J."/>
            <person name="Chen P."/>
            <person name="Wu S."/>
            <person name="Liu J."/>
            <person name="Xiao Y."/>
            <person name="Bu D."/>
            <person name="Tan J."/>
            <person name="Yang L."/>
            <person name="Ye C."/>
            <person name="Zhang J."/>
            <person name="Xu J."/>
            <person name="Zhou Y."/>
            <person name="Yu Y."/>
            <person name="Zhang B."/>
            <person name="Zhuang S."/>
            <person name="Wei H."/>
            <person name="Liu B."/>
            <person name="Lei M."/>
            <person name="Yu H."/>
            <person name="Li Y."/>
            <person name="Xu H."/>
            <person name="Wei S."/>
            <person name="He X."/>
            <person name="Fang L."/>
            <person name="Zhang Z."/>
            <person name="Zhang Y."/>
            <person name="Huang X."/>
            <person name="Su Z."/>
            <person name="Tong W."/>
            <person name="Li J."/>
            <person name="Tong Z."/>
            <person name="Li S."/>
            <person name="Ye J."/>
            <person name="Wang L."/>
            <person name="Fang L."/>
            <person name="Lei T."/>
            <person name="Chen C.-S."/>
            <person name="Chen H.-C."/>
            <person name="Xu Z."/>
            <person name="Li H."/>
            <person name="Huang H."/>
            <person name="Zhang F."/>
            <person name="Xu H."/>
            <person name="Li N."/>
            <person name="Zhao C."/>
            <person name="Li S."/>
            <person name="Dong L."/>
            <person name="Huang Y."/>
            <person name="Li L."/>
            <person name="Xi Y."/>
            <person name="Qi Q."/>
            <person name="Li W."/>
            <person name="Zhang B."/>
            <person name="Hu W."/>
            <person name="Zhang Y."/>
            <person name="Tian X."/>
            <person name="Jiao Y."/>
            <person name="Liang X."/>
            <person name="Jin J."/>
            <person name="Gao L."/>
            <person name="Zheng W."/>
            <person name="Hao B."/>
            <person name="Liu S.-M."/>
            <person name="Wang W."/>
            <person name="Yuan L."/>
            <person name="Cao M."/>
            <person name="McDermott J."/>
            <person name="Samudrala R."/>
            <person name="Wang J."/>
            <person name="Wong G.K.-S."/>
            <person name="Yang H."/>
        </authorList>
    </citation>
    <scope>NUCLEOTIDE SEQUENCE [LARGE SCALE GENOMIC DNA]</scope>
    <source>
        <strain>cv. Nipponbare</strain>
    </source>
</reference>
<keyword id="KW-0052">Apoplast</keyword>
<keyword id="KW-0325">Glycoprotein</keyword>
<keyword id="KW-0326">Glycosidase</keyword>
<keyword id="KW-0378">Hydrolase</keyword>
<keyword id="KW-1185">Reference proteome</keyword>
<keyword id="KW-0964">Secreted</keyword>
<keyword id="KW-0732">Signal</keyword>
<organism>
    <name type="scientific">Oryza sativa subsp. japonica</name>
    <name type="common">Rice</name>
    <dbReference type="NCBI Taxonomy" id="39947"/>
    <lineage>
        <taxon>Eukaryota</taxon>
        <taxon>Viridiplantae</taxon>
        <taxon>Streptophyta</taxon>
        <taxon>Embryophyta</taxon>
        <taxon>Tracheophyta</taxon>
        <taxon>Spermatophyta</taxon>
        <taxon>Magnoliopsida</taxon>
        <taxon>Liliopsida</taxon>
        <taxon>Poales</taxon>
        <taxon>Poaceae</taxon>
        <taxon>BOP clade</taxon>
        <taxon>Oryzoideae</taxon>
        <taxon>Oryzeae</taxon>
        <taxon>Oryzinae</taxon>
        <taxon>Oryza</taxon>
        <taxon>Oryza sativa</taxon>
    </lineage>
</organism>
<comment type="catalytic activity">
    <reaction>
        <text>Hydrolysis of terminal non-reducing beta-D-galactose residues in beta-D-galactosides.</text>
        <dbReference type="EC" id="3.2.1.23"/>
    </reaction>
</comment>
<comment type="subcellular location">
    <subcellularLocation>
        <location evidence="3">Secreted</location>
        <location evidence="3">Extracellular space</location>
        <location evidence="3">Apoplast</location>
    </subcellularLocation>
</comment>
<comment type="similarity">
    <text evidence="3">Belongs to the glycosyl hydrolase 35 family.</text>
</comment>
<protein>
    <recommendedName>
        <fullName>Beta-galactosidase 7</fullName>
        <shortName>Lactase 7</shortName>
        <ecNumber>3.2.1.23</ecNumber>
    </recommendedName>
</protein>
<gene>
    <name type="ordered locus">Os05g0428100</name>
    <name type="ordered locus">LOC_Os05g35360</name>
    <name type="ORF">OsJ_017861</name>
    <name type="ORF">OSJNBa0044P19.21</name>
    <name type="ORF">P0636F09.15</name>
</gene>
<feature type="signal peptide" evidence="1">
    <location>
        <begin position="1"/>
        <end position="17"/>
    </location>
</feature>
<feature type="chain" id="PRO_0000294159" description="Beta-galactosidase 7">
    <location>
        <begin position="18"/>
        <end position="775"/>
    </location>
</feature>
<feature type="domain" description="SUEL-type lectin" evidence="2">
    <location>
        <begin position="689"/>
        <end position="775"/>
    </location>
</feature>
<feature type="active site" description="Proton donor" evidence="1">
    <location>
        <position position="185"/>
    </location>
</feature>
<feature type="active site" description="Nucleophile" evidence="1">
    <location>
        <position position="256"/>
    </location>
</feature>
<feature type="glycosylation site" description="N-linked (GlcNAc...) asparagine" evidence="1">
    <location>
        <position position="257"/>
    </location>
</feature>
<feature type="glycosylation site" description="N-linked (GlcNAc...) asparagine" evidence="1">
    <location>
        <position position="266"/>
    </location>
</feature>
<feature type="glycosylation site" description="N-linked (GlcNAc...) asparagine" evidence="1">
    <location>
        <position position="277"/>
    </location>
</feature>
<feature type="glycosylation site" description="N-linked (GlcNAc...) asparagine" evidence="1">
    <location>
        <position position="358"/>
    </location>
</feature>
<feature type="glycosylation site" description="N-linked (GlcNAc...) asparagine" evidence="1">
    <location>
        <position position="602"/>
    </location>
</feature>
<proteinExistence type="inferred from homology"/>
<name>BGAL7_ORYSJ</name>
<sequence>MRGGMAITAALVVVAAAAESRWAELGREITYDGRALVVSGARRMFFSGDMHYARSTPEMWPKLIAKAKNGGLDVIQTYVFWNVHEPIQGQYNFEGRYDLVKFIREIQAQGLYVSLRIGPFVEAEWKYGGFPFWLHDVPSITFRSDNEPFKQHMQNFVTKIVTMMKHEGLYYPQGGPIIISQIENEYQMIEPAFGASGPRYVRWAAAMAVGLQTGVPWMMCKQNDAPDPVINTCNGLICGETFVGPNSPNKPALWTENWTSRSNGQNNSAFSYPIYGNDTKLRAPEDIAFAVALFIARKKGSFVSYYMYHGGTNFGRFAASYVTTSYYDGAPLDEYDFKCVAFLVNFDQHNTPKVEFRNISLELAPKSISVLSDCRNVVFETAKVNAQHGSRTANAVQSLNDINNWKAFIEPVPQDLSKSTYTGNQLFEQLTTTKDETDYLWYIVSYKNRASDGNQIAHLYVKSLAHILHAFVNNEYVGSVHGSHDGPRNIVLNTHMSLKEGDNTISLLSVMVGSPDSGAYMERRTFGIQTVGIQQGQQPMHLLNNDLWGYQVGLFGEKDSIYTQEGTNSVRWMDINNLIYHPLTWYKTTFSTPPGNDAVTLNLTSMGKGEVWVNGESIGRYWVSFKAPSGQPSQSLYHIPRGFLTPKDNLLVLVEEMGGDPLQITVNTMSVTTVCGNVDEFSVPPLQSRGKVPKVRIWCQGGNRISSIEFASYGNPVGDCRSFRIGSCHAESSESVVKQSCIGRRGCSIPVMAAKFGGDPCPGIQKSLLVVADCR</sequence>
<accession>Q75HQ3</accession>
<dbReference type="EC" id="3.2.1.23"/>
<dbReference type="EMBL" id="AC135419">
    <property type="protein sequence ID" value="AAV25023.1"/>
    <property type="molecule type" value="Genomic_DNA"/>
</dbReference>
<dbReference type="EMBL" id="AC135429">
    <property type="protein sequence ID" value="AAS90664.1"/>
    <property type="molecule type" value="Genomic_DNA"/>
</dbReference>
<dbReference type="EMBL" id="AP014961">
    <property type="status" value="NOT_ANNOTATED_CDS"/>
    <property type="molecule type" value="Genomic_DNA"/>
</dbReference>
<dbReference type="EMBL" id="CM000142">
    <property type="status" value="NOT_ANNOTATED_CDS"/>
    <property type="molecule type" value="Genomic_DNA"/>
</dbReference>
<dbReference type="SMR" id="Q75HQ3"/>
<dbReference type="FunCoup" id="Q75HQ3">
    <property type="interactions" value="68"/>
</dbReference>
<dbReference type="STRING" id="39947.Q75HQ3"/>
<dbReference type="CAZy" id="GH35">
    <property type="family name" value="Glycoside Hydrolase Family 35"/>
</dbReference>
<dbReference type="PaxDb" id="39947-Q75HQ3"/>
<dbReference type="eggNOG" id="KOG0496">
    <property type="taxonomic scope" value="Eukaryota"/>
</dbReference>
<dbReference type="InParanoid" id="Q75HQ3"/>
<dbReference type="Proteomes" id="UP000000763">
    <property type="component" value="Chromosome 5"/>
</dbReference>
<dbReference type="Proteomes" id="UP000007752">
    <property type="component" value="Chromosome 5"/>
</dbReference>
<dbReference type="Proteomes" id="UP000059680">
    <property type="component" value="Chromosome 5"/>
</dbReference>
<dbReference type="GO" id="GO:0048046">
    <property type="term" value="C:apoplast"/>
    <property type="evidence" value="ECO:0007669"/>
    <property type="project" value="UniProtKB-SubCell"/>
</dbReference>
<dbReference type="GO" id="GO:0009505">
    <property type="term" value="C:plant-type cell wall"/>
    <property type="evidence" value="ECO:0000318"/>
    <property type="project" value="GO_Central"/>
</dbReference>
<dbReference type="GO" id="GO:0005773">
    <property type="term" value="C:vacuole"/>
    <property type="evidence" value="ECO:0000318"/>
    <property type="project" value="GO_Central"/>
</dbReference>
<dbReference type="GO" id="GO:0004565">
    <property type="term" value="F:beta-galactosidase activity"/>
    <property type="evidence" value="ECO:0000318"/>
    <property type="project" value="GO_Central"/>
</dbReference>
<dbReference type="GO" id="GO:0030246">
    <property type="term" value="F:carbohydrate binding"/>
    <property type="evidence" value="ECO:0007669"/>
    <property type="project" value="InterPro"/>
</dbReference>
<dbReference type="GO" id="GO:0019388">
    <property type="term" value="P:galactose catabolic process"/>
    <property type="evidence" value="ECO:0000318"/>
    <property type="project" value="GO_Central"/>
</dbReference>
<dbReference type="GO" id="GO:0009827">
    <property type="term" value="P:plant-type cell wall modification"/>
    <property type="evidence" value="ECO:0000318"/>
    <property type="project" value="GO_Central"/>
</dbReference>
<dbReference type="CDD" id="cd22842">
    <property type="entry name" value="Gal_Rha_Lectin_BGal"/>
    <property type="match status" value="1"/>
</dbReference>
<dbReference type="FunFam" id="2.60.120.260:FF:000050">
    <property type="entry name" value="Beta-galactosidase"/>
    <property type="match status" value="1"/>
</dbReference>
<dbReference type="FunFam" id="2.60.120.740:FF:000002">
    <property type="entry name" value="Beta-galactosidase"/>
    <property type="match status" value="1"/>
</dbReference>
<dbReference type="FunFam" id="3.20.20.80:FF:000098">
    <property type="entry name" value="Beta-galactosidase"/>
    <property type="match status" value="1"/>
</dbReference>
<dbReference type="Gene3D" id="2.60.120.740">
    <property type="match status" value="1"/>
</dbReference>
<dbReference type="Gene3D" id="2.60.120.260">
    <property type="entry name" value="Galactose-binding domain-like"/>
    <property type="match status" value="1"/>
</dbReference>
<dbReference type="Gene3D" id="3.20.20.80">
    <property type="entry name" value="Glycosidases"/>
    <property type="match status" value="1"/>
</dbReference>
<dbReference type="InterPro" id="IPR048913">
    <property type="entry name" value="BetaGal_gal-bd"/>
</dbReference>
<dbReference type="InterPro" id="IPR008979">
    <property type="entry name" value="Galactose-bd-like_sf"/>
</dbReference>
<dbReference type="InterPro" id="IPR041392">
    <property type="entry name" value="GHD"/>
</dbReference>
<dbReference type="InterPro" id="IPR031330">
    <property type="entry name" value="Gly_Hdrlase_35_cat"/>
</dbReference>
<dbReference type="InterPro" id="IPR019801">
    <property type="entry name" value="Glyco_hydro_35_CS"/>
</dbReference>
<dbReference type="InterPro" id="IPR001944">
    <property type="entry name" value="Glycoside_Hdrlase_35"/>
</dbReference>
<dbReference type="InterPro" id="IPR017853">
    <property type="entry name" value="Glycoside_hydrolase_SF"/>
</dbReference>
<dbReference type="InterPro" id="IPR000922">
    <property type="entry name" value="Lectin_gal-bd_dom"/>
</dbReference>
<dbReference type="InterPro" id="IPR043159">
    <property type="entry name" value="Lectin_gal-bd_sf"/>
</dbReference>
<dbReference type="PANTHER" id="PTHR23421">
    <property type="entry name" value="BETA-GALACTOSIDASE RELATED"/>
    <property type="match status" value="1"/>
</dbReference>
<dbReference type="Pfam" id="PF21467">
    <property type="entry name" value="BetaGal_gal-bd"/>
    <property type="match status" value="1"/>
</dbReference>
<dbReference type="Pfam" id="PF17834">
    <property type="entry name" value="GHD"/>
    <property type="match status" value="1"/>
</dbReference>
<dbReference type="Pfam" id="PF01301">
    <property type="entry name" value="Glyco_hydro_35"/>
    <property type="match status" value="1"/>
</dbReference>
<dbReference type="Pfam" id="PF02140">
    <property type="entry name" value="SUEL_Lectin"/>
    <property type="match status" value="1"/>
</dbReference>
<dbReference type="PRINTS" id="PR00742">
    <property type="entry name" value="GLHYDRLASE35"/>
</dbReference>
<dbReference type="SUPFAM" id="SSF51445">
    <property type="entry name" value="(Trans)glycosidases"/>
    <property type="match status" value="1"/>
</dbReference>
<dbReference type="SUPFAM" id="SSF49785">
    <property type="entry name" value="Galactose-binding domain-like"/>
    <property type="match status" value="2"/>
</dbReference>
<dbReference type="PROSITE" id="PS01182">
    <property type="entry name" value="GLYCOSYL_HYDROL_F35"/>
    <property type="match status" value="1"/>
</dbReference>
<dbReference type="PROSITE" id="PS50228">
    <property type="entry name" value="SUEL_LECTIN"/>
    <property type="match status" value="1"/>
</dbReference>